<protein>
    <recommendedName>
        <fullName evidence="1">5-oxoprolinase subunit A 1</fullName>
        <shortName evidence="1">5-OPase subunit A 1</shortName>
        <ecNumber evidence="1">3.5.2.9</ecNumber>
    </recommendedName>
    <alternativeName>
        <fullName evidence="1">5-oxoprolinase (ATP-hydrolyzing) subunit A 1</fullName>
    </alternativeName>
</protein>
<reference key="1">
    <citation type="journal article" date="2004" name="Proc. Natl. Acad. Sci. U.S.A.">
        <title>Genomic plasticity of the causative agent of melioidosis, Burkholderia pseudomallei.</title>
        <authorList>
            <person name="Holden M.T.G."/>
            <person name="Titball R.W."/>
            <person name="Peacock S.J."/>
            <person name="Cerdeno-Tarraga A.-M."/>
            <person name="Atkins T."/>
            <person name="Crossman L.C."/>
            <person name="Pitt T."/>
            <person name="Churcher C."/>
            <person name="Mungall K.L."/>
            <person name="Bentley S.D."/>
            <person name="Sebaihia M."/>
            <person name="Thomson N.R."/>
            <person name="Bason N."/>
            <person name="Beacham I.R."/>
            <person name="Brooks K."/>
            <person name="Brown K.A."/>
            <person name="Brown N.F."/>
            <person name="Challis G.L."/>
            <person name="Cherevach I."/>
            <person name="Chillingworth T."/>
            <person name="Cronin A."/>
            <person name="Crossett B."/>
            <person name="Davis P."/>
            <person name="DeShazer D."/>
            <person name="Feltwell T."/>
            <person name="Fraser A."/>
            <person name="Hance Z."/>
            <person name="Hauser H."/>
            <person name="Holroyd S."/>
            <person name="Jagels K."/>
            <person name="Keith K.E."/>
            <person name="Maddison M."/>
            <person name="Moule S."/>
            <person name="Price C."/>
            <person name="Quail M.A."/>
            <person name="Rabbinowitsch E."/>
            <person name="Rutherford K."/>
            <person name="Sanders M."/>
            <person name="Simmonds M."/>
            <person name="Songsivilai S."/>
            <person name="Stevens K."/>
            <person name="Tumapa S."/>
            <person name="Vesaratchavest M."/>
            <person name="Whitehead S."/>
            <person name="Yeats C."/>
            <person name="Barrell B.G."/>
            <person name="Oyston P.C.F."/>
            <person name="Parkhill J."/>
        </authorList>
    </citation>
    <scope>NUCLEOTIDE SEQUENCE [LARGE SCALE GENOMIC DNA]</scope>
    <source>
        <strain>K96243</strain>
    </source>
</reference>
<organism>
    <name type="scientific">Burkholderia pseudomallei (strain K96243)</name>
    <dbReference type="NCBI Taxonomy" id="272560"/>
    <lineage>
        <taxon>Bacteria</taxon>
        <taxon>Pseudomonadati</taxon>
        <taxon>Pseudomonadota</taxon>
        <taxon>Betaproteobacteria</taxon>
        <taxon>Burkholderiales</taxon>
        <taxon>Burkholderiaceae</taxon>
        <taxon>Burkholderia</taxon>
        <taxon>pseudomallei group</taxon>
    </lineage>
</organism>
<sequence>MEIDLNADLGEGCGSDEALLDLVTSANIACGWHAGGAQAMRDCVRWAVEKGVSIGAHPSFHDPENFGRKEMDLPASEIYAGVLYQLGALSAFAQAEGGRIAHVKPHGALYNQAAREPEIADAVVSAIHDFDPSLAVFGLAKSGFVDAARQAGLVAVEEVFADRGYRADGSLVPRSQPGALVDDENEMLARTLEMVRGQRVRAVTGEWVPLNAQTVCLHGDGPHALAFAKRIRDALEAAGIDVHAPGALHAGERA</sequence>
<gene>
    <name evidence="1" type="primary">pxpA1</name>
    <name type="ordered locus">BPSL0257</name>
</gene>
<keyword id="KW-0067">ATP-binding</keyword>
<keyword id="KW-0378">Hydrolase</keyword>
<keyword id="KW-0547">Nucleotide-binding</keyword>
<keyword id="KW-1185">Reference proteome</keyword>
<name>PXPA1_BURPS</name>
<proteinExistence type="inferred from homology"/>
<evidence type="ECO:0000255" key="1">
    <source>
        <dbReference type="HAMAP-Rule" id="MF_00691"/>
    </source>
</evidence>
<dbReference type="EC" id="3.5.2.9" evidence="1"/>
<dbReference type="EMBL" id="BX571965">
    <property type="protein sequence ID" value="CAH34245.1"/>
    <property type="molecule type" value="Genomic_DNA"/>
</dbReference>
<dbReference type="RefSeq" id="WP_009935993.1">
    <property type="nucleotide sequence ID" value="NC_006350.1"/>
</dbReference>
<dbReference type="RefSeq" id="YP_106884.1">
    <property type="nucleotide sequence ID" value="NC_006350.1"/>
</dbReference>
<dbReference type="SMR" id="Q63YD1"/>
<dbReference type="STRING" id="272560.BPSL0257"/>
<dbReference type="KEGG" id="bps:BPSL0257"/>
<dbReference type="PATRIC" id="fig|272560.51.peg.1451"/>
<dbReference type="eggNOG" id="COG1540">
    <property type="taxonomic scope" value="Bacteria"/>
</dbReference>
<dbReference type="Proteomes" id="UP000000605">
    <property type="component" value="Chromosome 1"/>
</dbReference>
<dbReference type="GO" id="GO:0017168">
    <property type="term" value="F:5-oxoprolinase (ATP-hydrolyzing) activity"/>
    <property type="evidence" value="ECO:0007669"/>
    <property type="project" value="UniProtKB-UniRule"/>
</dbReference>
<dbReference type="GO" id="GO:0005524">
    <property type="term" value="F:ATP binding"/>
    <property type="evidence" value="ECO:0007669"/>
    <property type="project" value="UniProtKB-UniRule"/>
</dbReference>
<dbReference type="GO" id="GO:0005975">
    <property type="term" value="P:carbohydrate metabolic process"/>
    <property type="evidence" value="ECO:0007669"/>
    <property type="project" value="InterPro"/>
</dbReference>
<dbReference type="CDD" id="cd10800">
    <property type="entry name" value="LamB_YcsF_YbgL_like"/>
    <property type="match status" value="1"/>
</dbReference>
<dbReference type="Gene3D" id="3.20.20.370">
    <property type="entry name" value="Glycoside hydrolase/deacetylase"/>
    <property type="match status" value="1"/>
</dbReference>
<dbReference type="HAMAP" id="MF_00691">
    <property type="entry name" value="PxpA"/>
    <property type="match status" value="1"/>
</dbReference>
<dbReference type="InterPro" id="IPR011330">
    <property type="entry name" value="Glyco_hydro/deAcase_b/a-brl"/>
</dbReference>
<dbReference type="InterPro" id="IPR005501">
    <property type="entry name" value="LamB/YcsF/PxpA-like"/>
</dbReference>
<dbReference type="NCBIfam" id="NF003812">
    <property type="entry name" value="PRK05406.1-1"/>
    <property type="match status" value="1"/>
</dbReference>
<dbReference type="NCBIfam" id="NF003814">
    <property type="entry name" value="PRK05406.1-3"/>
    <property type="match status" value="1"/>
</dbReference>
<dbReference type="NCBIfam" id="NF003815">
    <property type="entry name" value="PRK05406.1-4"/>
    <property type="match status" value="1"/>
</dbReference>
<dbReference type="NCBIfam" id="NF003816">
    <property type="entry name" value="PRK05406.1-5"/>
    <property type="match status" value="1"/>
</dbReference>
<dbReference type="PANTHER" id="PTHR30292:SF0">
    <property type="entry name" value="5-OXOPROLINASE SUBUNIT A"/>
    <property type="match status" value="1"/>
</dbReference>
<dbReference type="PANTHER" id="PTHR30292">
    <property type="entry name" value="UNCHARACTERIZED PROTEIN YBGL-RELATED"/>
    <property type="match status" value="1"/>
</dbReference>
<dbReference type="Pfam" id="PF03746">
    <property type="entry name" value="LamB_YcsF"/>
    <property type="match status" value="1"/>
</dbReference>
<dbReference type="SUPFAM" id="SSF88713">
    <property type="entry name" value="Glycoside hydrolase/deacetylase"/>
    <property type="match status" value="1"/>
</dbReference>
<comment type="function">
    <text evidence="1">Catalyzes the cleavage of 5-oxoproline to form L-glutamate coupled to the hydrolysis of ATP to ADP and inorganic phosphate.</text>
</comment>
<comment type="catalytic activity">
    <reaction evidence="1">
        <text>5-oxo-L-proline + ATP + 2 H2O = L-glutamate + ADP + phosphate + H(+)</text>
        <dbReference type="Rhea" id="RHEA:10348"/>
        <dbReference type="ChEBI" id="CHEBI:15377"/>
        <dbReference type="ChEBI" id="CHEBI:15378"/>
        <dbReference type="ChEBI" id="CHEBI:29985"/>
        <dbReference type="ChEBI" id="CHEBI:30616"/>
        <dbReference type="ChEBI" id="CHEBI:43474"/>
        <dbReference type="ChEBI" id="CHEBI:58402"/>
        <dbReference type="ChEBI" id="CHEBI:456216"/>
        <dbReference type="EC" id="3.5.2.9"/>
    </reaction>
</comment>
<comment type="subunit">
    <text evidence="1">Forms a complex composed of PxpA, PxpB and PxpC.</text>
</comment>
<comment type="similarity">
    <text evidence="1">Belongs to the LamB/PxpA family.</text>
</comment>
<accession>Q63YD1</accession>
<feature type="chain" id="PRO_0000184998" description="5-oxoprolinase subunit A 1">
    <location>
        <begin position="1"/>
        <end position="254"/>
    </location>
</feature>